<protein>
    <recommendedName>
        <fullName evidence="1">Large ribosomal subunit protein bL28</fullName>
    </recommendedName>
    <alternativeName>
        <fullName evidence="3">50S ribosomal protein L28</fullName>
    </alternativeName>
</protein>
<evidence type="ECO:0000255" key="1">
    <source>
        <dbReference type="HAMAP-Rule" id="MF_00373"/>
    </source>
</evidence>
<evidence type="ECO:0000256" key="2">
    <source>
        <dbReference type="SAM" id="MobiDB-lite"/>
    </source>
</evidence>
<evidence type="ECO:0000305" key="3"/>
<dbReference type="EMBL" id="AM406671">
    <property type="protein sequence ID" value="CAL96810.1"/>
    <property type="molecule type" value="Genomic_DNA"/>
</dbReference>
<dbReference type="RefSeq" id="WP_003129776.1">
    <property type="nucleotide sequence ID" value="NZ_WJVF01000001.1"/>
</dbReference>
<dbReference type="PDB" id="5MYJ">
    <property type="method" value="EM"/>
    <property type="resolution" value="5.60 A"/>
    <property type="chains" value="B0=1-64"/>
</dbReference>
<dbReference type="PDBsum" id="5MYJ"/>
<dbReference type="EMDB" id="EMD-3581"/>
<dbReference type="SMR" id="A2RHS3"/>
<dbReference type="STRING" id="416870.llmg_0204"/>
<dbReference type="GeneID" id="89632332"/>
<dbReference type="KEGG" id="llm:llmg_0204"/>
<dbReference type="eggNOG" id="COG0227">
    <property type="taxonomic scope" value="Bacteria"/>
</dbReference>
<dbReference type="HOGENOM" id="CLU_064548_7_1_9"/>
<dbReference type="OrthoDB" id="9805609at2"/>
<dbReference type="PhylomeDB" id="A2RHS3"/>
<dbReference type="Proteomes" id="UP000000364">
    <property type="component" value="Chromosome"/>
</dbReference>
<dbReference type="GO" id="GO:1990904">
    <property type="term" value="C:ribonucleoprotein complex"/>
    <property type="evidence" value="ECO:0007669"/>
    <property type="project" value="UniProtKB-KW"/>
</dbReference>
<dbReference type="GO" id="GO:0005840">
    <property type="term" value="C:ribosome"/>
    <property type="evidence" value="ECO:0007669"/>
    <property type="project" value="UniProtKB-KW"/>
</dbReference>
<dbReference type="GO" id="GO:0003735">
    <property type="term" value="F:structural constituent of ribosome"/>
    <property type="evidence" value="ECO:0007669"/>
    <property type="project" value="InterPro"/>
</dbReference>
<dbReference type="GO" id="GO:0006412">
    <property type="term" value="P:translation"/>
    <property type="evidence" value="ECO:0007669"/>
    <property type="project" value="UniProtKB-UniRule"/>
</dbReference>
<dbReference type="Gene3D" id="2.30.170.40">
    <property type="entry name" value="Ribosomal protein L28/L24"/>
    <property type="match status" value="1"/>
</dbReference>
<dbReference type="HAMAP" id="MF_00373">
    <property type="entry name" value="Ribosomal_bL28"/>
    <property type="match status" value="1"/>
</dbReference>
<dbReference type="InterPro" id="IPR050096">
    <property type="entry name" value="Bacterial_rp_bL28"/>
</dbReference>
<dbReference type="InterPro" id="IPR026569">
    <property type="entry name" value="Ribosomal_bL28"/>
</dbReference>
<dbReference type="InterPro" id="IPR034704">
    <property type="entry name" value="Ribosomal_bL28/bL31-like_sf"/>
</dbReference>
<dbReference type="InterPro" id="IPR001383">
    <property type="entry name" value="Ribosomal_bL28_bact-type"/>
</dbReference>
<dbReference type="InterPro" id="IPR037147">
    <property type="entry name" value="Ribosomal_bL28_sf"/>
</dbReference>
<dbReference type="NCBIfam" id="TIGR00009">
    <property type="entry name" value="L28"/>
    <property type="match status" value="1"/>
</dbReference>
<dbReference type="PANTHER" id="PTHR39080">
    <property type="entry name" value="50S RIBOSOMAL PROTEIN L28"/>
    <property type="match status" value="1"/>
</dbReference>
<dbReference type="PANTHER" id="PTHR39080:SF1">
    <property type="entry name" value="LARGE RIBOSOMAL SUBUNIT PROTEIN BL28A"/>
    <property type="match status" value="1"/>
</dbReference>
<dbReference type="Pfam" id="PF00830">
    <property type="entry name" value="Ribosomal_L28"/>
    <property type="match status" value="1"/>
</dbReference>
<dbReference type="SUPFAM" id="SSF143800">
    <property type="entry name" value="L28p-like"/>
    <property type="match status" value="1"/>
</dbReference>
<comment type="similarity">
    <text evidence="1">Belongs to the bacterial ribosomal protein bL28 family.</text>
</comment>
<keyword id="KW-0002">3D-structure</keyword>
<keyword id="KW-0687">Ribonucleoprotein</keyword>
<keyword id="KW-0689">Ribosomal protein</keyword>
<feature type="chain" id="PRO_1000007263" description="Large ribosomal subunit protein bL28">
    <location>
        <begin position="1"/>
        <end position="64"/>
    </location>
</feature>
<feature type="region of interest" description="Disordered" evidence="2">
    <location>
        <begin position="1"/>
        <end position="23"/>
    </location>
</feature>
<feature type="compositionally biased region" description="Polar residues" evidence="2">
    <location>
        <begin position="11"/>
        <end position="23"/>
    </location>
</feature>
<reference key="1">
    <citation type="journal article" date="2007" name="J. Bacteriol.">
        <title>The complete genome sequence of the lactic acid bacterial paradigm Lactococcus lactis subsp. cremoris MG1363.</title>
        <authorList>
            <person name="Wegmann U."/>
            <person name="O'Connell-Motherway M."/>
            <person name="Zomer A."/>
            <person name="Buist G."/>
            <person name="Shearman C."/>
            <person name="Canchaya C."/>
            <person name="Ventura M."/>
            <person name="Goesmann A."/>
            <person name="Gasson M.J."/>
            <person name="Kuipers O.P."/>
            <person name="van Sinderen D."/>
            <person name="Kok J."/>
        </authorList>
    </citation>
    <scope>NUCLEOTIDE SEQUENCE [LARGE SCALE GENOMIC DNA]</scope>
    <source>
        <strain>MG1363</strain>
    </source>
</reference>
<proteinExistence type="evidence at protein level"/>
<accession>A2RHS3</accession>
<organism>
    <name type="scientific">Lactococcus lactis subsp. cremoris (strain MG1363)</name>
    <dbReference type="NCBI Taxonomy" id="416870"/>
    <lineage>
        <taxon>Bacteria</taxon>
        <taxon>Bacillati</taxon>
        <taxon>Bacillota</taxon>
        <taxon>Bacilli</taxon>
        <taxon>Lactobacillales</taxon>
        <taxon>Streptococcaceae</taxon>
        <taxon>Lactococcus</taxon>
        <taxon>Lactococcus cremoris subsp. cremoris</taxon>
    </lineage>
</organism>
<gene>
    <name evidence="1" type="primary">rpmB</name>
    <name type="ordered locus">llmg_0204</name>
</gene>
<name>RL28_LACLM</name>
<sequence length="64" mass="7173">MSKECYFTGRKTVSSNNRSHAMNQTKRVVKPNLQKVTILENGELKTVWASAKALKKLPAGVERV</sequence>